<evidence type="ECO:0000255" key="1">
    <source>
        <dbReference type="HAMAP-Rule" id="MF_01325"/>
    </source>
</evidence>
<evidence type="ECO:0000305" key="2"/>
<keyword id="KW-0488">Methylation</keyword>
<keyword id="KW-0687">Ribonucleoprotein</keyword>
<keyword id="KW-0689">Ribosomal protein</keyword>
<keyword id="KW-0694">RNA-binding</keyword>
<keyword id="KW-0699">rRNA-binding</keyword>
<comment type="function">
    <text evidence="1">One of the primary rRNA binding proteins, it binds directly near the 3'-end of the 23S rRNA, where it nucleates assembly of the 50S subunit.</text>
</comment>
<comment type="subunit">
    <text evidence="1">Part of the 50S ribosomal subunit. Forms a cluster with proteins L14 and L19.</text>
</comment>
<comment type="PTM">
    <text evidence="1">Methylated by PrmB.</text>
</comment>
<comment type="similarity">
    <text evidence="1">Belongs to the universal ribosomal protein uL3 family.</text>
</comment>
<proteinExistence type="inferred from homology"/>
<protein>
    <recommendedName>
        <fullName evidence="1">Large ribosomal subunit protein uL3</fullName>
    </recommendedName>
    <alternativeName>
        <fullName evidence="2">50S ribosomal protein L3</fullName>
    </alternativeName>
</protein>
<name>RL3_DECAR</name>
<accession>Q47JA3</accession>
<organism>
    <name type="scientific">Dechloromonas aromatica (strain RCB)</name>
    <dbReference type="NCBI Taxonomy" id="159087"/>
    <lineage>
        <taxon>Bacteria</taxon>
        <taxon>Pseudomonadati</taxon>
        <taxon>Pseudomonadota</taxon>
        <taxon>Betaproteobacteria</taxon>
        <taxon>Rhodocyclales</taxon>
        <taxon>Azonexaceae</taxon>
        <taxon>Dechloromonas</taxon>
    </lineage>
</organism>
<reference key="1">
    <citation type="journal article" date="2009" name="BMC Genomics">
        <title>Metabolic analysis of the soil microbe Dechloromonas aromatica str. RCB: indications of a surprisingly complex life-style and cryptic anaerobic pathways for aromatic degradation.</title>
        <authorList>
            <person name="Salinero K.K."/>
            <person name="Keller K."/>
            <person name="Feil W.S."/>
            <person name="Feil H."/>
            <person name="Trong S."/>
            <person name="Di Bartolo G."/>
            <person name="Lapidus A."/>
        </authorList>
    </citation>
    <scope>NUCLEOTIDE SEQUENCE [LARGE SCALE GENOMIC DNA]</scope>
    <source>
        <strain>RCB</strain>
    </source>
</reference>
<gene>
    <name evidence="1" type="primary">rplC</name>
    <name type="ordered locus">Daro_0319</name>
</gene>
<feature type="chain" id="PRO_0000241337" description="Large ribosomal subunit protein uL3">
    <location>
        <begin position="1"/>
        <end position="212"/>
    </location>
</feature>
<feature type="modified residue" description="N5-methylglutamine" evidence="1">
    <location>
        <position position="153"/>
    </location>
</feature>
<sequence length="212" mass="22117">MSLGLVGRKVGMTRIFAEDGASIPVTVLDVSNNRVTQVKTPEIDGYAAIQVAFGKRRASRVSKPLAGHLAKAGVEAGHVLKEFQIEADQLASFKAGDQVAVTIFAEGQKVDVTGTSIGKGFQGGIKRHNFSSNRASHGNSLSHNAPGSIGMAQDPGRVFPGKRMAGHLGDVQSTMQGLTIVRVDADRQLLLVKGAVPGAKGSDVVVRPAVKA</sequence>
<dbReference type="EMBL" id="CP000089">
    <property type="protein sequence ID" value="AAZ45078.1"/>
    <property type="molecule type" value="Genomic_DNA"/>
</dbReference>
<dbReference type="SMR" id="Q47JA3"/>
<dbReference type="STRING" id="159087.Daro_0319"/>
<dbReference type="KEGG" id="dar:Daro_0319"/>
<dbReference type="eggNOG" id="COG0087">
    <property type="taxonomic scope" value="Bacteria"/>
</dbReference>
<dbReference type="HOGENOM" id="CLU_044142_4_1_4"/>
<dbReference type="OrthoDB" id="9806135at2"/>
<dbReference type="GO" id="GO:0022625">
    <property type="term" value="C:cytosolic large ribosomal subunit"/>
    <property type="evidence" value="ECO:0007669"/>
    <property type="project" value="TreeGrafter"/>
</dbReference>
<dbReference type="GO" id="GO:0019843">
    <property type="term" value="F:rRNA binding"/>
    <property type="evidence" value="ECO:0007669"/>
    <property type="project" value="UniProtKB-UniRule"/>
</dbReference>
<dbReference type="GO" id="GO:0003735">
    <property type="term" value="F:structural constituent of ribosome"/>
    <property type="evidence" value="ECO:0007669"/>
    <property type="project" value="InterPro"/>
</dbReference>
<dbReference type="GO" id="GO:0006412">
    <property type="term" value="P:translation"/>
    <property type="evidence" value="ECO:0007669"/>
    <property type="project" value="UniProtKB-UniRule"/>
</dbReference>
<dbReference type="FunFam" id="2.40.30.10:FF:000004">
    <property type="entry name" value="50S ribosomal protein L3"/>
    <property type="match status" value="1"/>
</dbReference>
<dbReference type="FunFam" id="3.30.160.810:FF:000001">
    <property type="entry name" value="50S ribosomal protein L3"/>
    <property type="match status" value="1"/>
</dbReference>
<dbReference type="Gene3D" id="3.30.160.810">
    <property type="match status" value="1"/>
</dbReference>
<dbReference type="Gene3D" id="2.40.30.10">
    <property type="entry name" value="Translation factors"/>
    <property type="match status" value="1"/>
</dbReference>
<dbReference type="HAMAP" id="MF_01325_B">
    <property type="entry name" value="Ribosomal_uL3_B"/>
    <property type="match status" value="1"/>
</dbReference>
<dbReference type="InterPro" id="IPR000597">
    <property type="entry name" value="Ribosomal_uL3"/>
</dbReference>
<dbReference type="InterPro" id="IPR019927">
    <property type="entry name" value="Ribosomal_uL3_bac/org-type"/>
</dbReference>
<dbReference type="InterPro" id="IPR019926">
    <property type="entry name" value="Ribosomal_uL3_CS"/>
</dbReference>
<dbReference type="InterPro" id="IPR009000">
    <property type="entry name" value="Transl_B-barrel_sf"/>
</dbReference>
<dbReference type="NCBIfam" id="TIGR03625">
    <property type="entry name" value="L3_bact"/>
    <property type="match status" value="1"/>
</dbReference>
<dbReference type="PANTHER" id="PTHR11229">
    <property type="entry name" value="50S RIBOSOMAL PROTEIN L3"/>
    <property type="match status" value="1"/>
</dbReference>
<dbReference type="PANTHER" id="PTHR11229:SF16">
    <property type="entry name" value="LARGE RIBOSOMAL SUBUNIT PROTEIN UL3C"/>
    <property type="match status" value="1"/>
</dbReference>
<dbReference type="Pfam" id="PF00297">
    <property type="entry name" value="Ribosomal_L3"/>
    <property type="match status" value="1"/>
</dbReference>
<dbReference type="SUPFAM" id="SSF50447">
    <property type="entry name" value="Translation proteins"/>
    <property type="match status" value="1"/>
</dbReference>
<dbReference type="PROSITE" id="PS00474">
    <property type="entry name" value="RIBOSOMAL_L3"/>
    <property type="match status" value="1"/>
</dbReference>